<feature type="chain" id="PRO_1000008492" description="Holo-[acyl-carrier-protein] synthase">
    <location>
        <begin position="1"/>
        <end position="126"/>
    </location>
</feature>
<feature type="binding site" evidence="1">
    <location>
        <position position="9"/>
    </location>
    <ligand>
        <name>Mg(2+)</name>
        <dbReference type="ChEBI" id="CHEBI:18420"/>
    </ligand>
</feature>
<feature type="binding site" evidence="1">
    <location>
        <position position="58"/>
    </location>
    <ligand>
        <name>Mg(2+)</name>
        <dbReference type="ChEBI" id="CHEBI:18420"/>
    </ligand>
</feature>
<dbReference type="EC" id="2.7.8.7" evidence="1"/>
<dbReference type="EMBL" id="CP000302">
    <property type="protein sequence ID" value="ABE56041.1"/>
    <property type="molecule type" value="Genomic_DNA"/>
</dbReference>
<dbReference type="RefSeq" id="WP_011497191.1">
    <property type="nucleotide sequence ID" value="NC_007954.1"/>
</dbReference>
<dbReference type="SMR" id="Q12KI5"/>
<dbReference type="STRING" id="318161.Sden_2762"/>
<dbReference type="KEGG" id="sdn:Sden_2762"/>
<dbReference type="eggNOG" id="COG0736">
    <property type="taxonomic scope" value="Bacteria"/>
</dbReference>
<dbReference type="HOGENOM" id="CLU_089696_3_1_6"/>
<dbReference type="OrthoDB" id="517356at2"/>
<dbReference type="Proteomes" id="UP000001982">
    <property type="component" value="Chromosome"/>
</dbReference>
<dbReference type="GO" id="GO:0005737">
    <property type="term" value="C:cytoplasm"/>
    <property type="evidence" value="ECO:0007669"/>
    <property type="project" value="UniProtKB-SubCell"/>
</dbReference>
<dbReference type="GO" id="GO:0008897">
    <property type="term" value="F:holo-[acyl-carrier-protein] synthase activity"/>
    <property type="evidence" value="ECO:0007669"/>
    <property type="project" value="UniProtKB-UniRule"/>
</dbReference>
<dbReference type="GO" id="GO:0000287">
    <property type="term" value="F:magnesium ion binding"/>
    <property type="evidence" value="ECO:0007669"/>
    <property type="project" value="UniProtKB-UniRule"/>
</dbReference>
<dbReference type="GO" id="GO:0006633">
    <property type="term" value="P:fatty acid biosynthetic process"/>
    <property type="evidence" value="ECO:0007669"/>
    <property type="project" value="UniProtKB-UniRule"/>
</dbReference>
<dbReference type="FunFam" id="3.90.470.20:FF:000001">
    <property type="entry name" value="Holo-[acyl-carrier-protein] synthase"/>
    <property type="match status" value="1"/>
</dbReference>
<dbReference type="Gene3D" id="3.90.470.20">
    <property type="entry name" value="4'-phosphopantetheinyl transferase domain"/>
    <property type="match status" value="1"/>
</dbReference>
<dbReference type="HAMAP" id="MF_00101">
    <property type="entry name" value="AcpS"/>
    <property type="match status" value="1"/>
</dbReference>
<dbReference type="InterPro" id="IPR008278">
    <property type="entry name" value="4-PPantetheinyl_Trfase_dom"/>
</dbReference>
<dbReference type="InterPro" id="IPR037143">
    <property type="entry name" value="4-PPantetheinyl_Trfase_dom_sf"/>
</dbReference>
<dbReference type="InterPro" id="IPR002582">
    <property type="entry name" value="ACPS"/>
</dbReference>
<dbReference type="InterPro" id="IPR004568">
    <property type="entry name" value="Ppantetheine-prot_Trfase_dom"/>
</dbReference>
<dbReference type="NCBIfam" id="TIGR00516">
    <property type="entry name" value="acpS"/>
    <property type="match status" value="1"/>
</dbReference>
<dbReference type="NCBIfam" id="TIGR00556">
    <property type="entry name" value="pantethn_trn"/>
    <property type="match status" value="1"/>
</dbReference>
<dbReference type="Pfam" id="PF01648">
    <property type="entry name" value="ACPS"/>
    <property type="match status" value="1"/>
</dbReference>
<dbReference type="SUPFAM" id="SSF56214">
    <property type="entry name" value="4'-phosphopantetheinyl transferase"/>
    <property type="match status" value="1"/>
</dbReference>
<organism>
    <name type="scientific">Shewanella denitrificans (strain OS217 / ATCC BAA-1090 / DSM 15013)</name>
    <dbReference type="NCBI Taxonomy" id="318161"/>
    <lineage>
        <taxon>Bacteria</taxon>
        <taxon>Pseudomonadati</taxon>
        <taxon>Pseudomonadota</taxon>
        <taxon>Gammaproteobacteria</taxon>
        <taxon>Alteromonadales</taxon>
        <taxon>Shewanellaceae</taxon>
        <taxon>Shewanella</taxon>
    </lineage>
</organism>
<proteinExistence type="inferred from homology"/>
<gene>
    <name evidence="1" type="primary">acpS</name>
    <name type="ordered locus">Sden_2762</name>
</gene>
<reference key="1">
    <citation type="submission" date="2006-03" db="EMBL/GenBank/DDBJ databases">
        <title>Complete sequence of Shewanella denitrificans OS217.</title>
        <authorList>
            <consortium name="US DOE Joint Genome Institute"/>
            <person name="Copeland A."/>
            <person name="Lucas S."/>
            <person name="Lapidus A."/>
            <person name="Barry K."/>
            <person name="Detter J.C."/>
            <person name="Glavina del Rio T."/>
            <person name="Hammon N."/>
            <person name="Israni S."/>
            <person name="Dalin E."/>
            <person name="Tice H."/>
            <person name="Pitluck S."/>
            <person name="Brettin T."/>
            <person name="Bruce D."/>
            <person name="Han C."/>
            <person name="Tapia R."/>
            <person name="Gilna P."/>
            <person name="Kiss H."/>
            <person name="Schmutz J."/>
            <person name="Larimer F."/>
            <person name="Land M."/>
            <person name="Hauser L."/>
            <person name="Kyrpides N."/>
            <person name="Lykidis A."/>
            <person name="Richardson P."/>
        </authorList>
    </citation>
    <scope>NUCLEOTIDE SEQUENCE [LARGE SCALE GENOMIC DNA]</scope>
    <source>
        <strain>OS217 / ATCC BAA-1090 / DSM 15013</strain>
    </source>
</reference>
<accession>Q12KI5</accession>
<comment type="function">
    <text evidence="1">Transfers the 4'-phosphopantetheine moiety from coenzyme A to a Ser of acyl-carrier-protein.</text>
</comment>
<comment type="catalytic activity">
    <reaction evidence="1">
        <text>apo-[ACP] + CoA = holo-[ACP] + adenosine 3',5'-bisphosphate + H(+)</text>
        <dbReference type="Rhea" id="RHEA:12068"/>
        <dbReference type="Rhea" id="RHEA-COMP:9685"/>
        <dbReference type="Rhea" id="RHEA-COMP:9690"/>
        <dbReference type="ChEBI" id="CHEBI:15378"/>
        <dbReference type="ChEBI" id="CHEBI:29999"/>
        <dbReference type="ChEBI" id="CHEBI:57287"/>
        <dbReference type="ChEBI" id="CHEBI:58343"/>
        <dbReference type="ChEBI" id="CHEBI:64479"/>
        <dbReference type="EC" id="2.7.8.7"/>
    </reaction>
</comment>
<comment type="cofactor">
    <cofactor evidence="1">
        <name>Mg(2+)</name>
        <dbReference type="ChEBI" id="CHEBI:18420"/>
    </cofactor>
</comment>
<comment type="subcellular location">
    <subcellularLocation>
        <location evidence="1">Cytoplasm</location>
    </subcellularLocation>
</comment>
<comment type="similarity">
    <text evidence="1">Belongs to the P-Pant transferase superfamily. AcpS family.</text>
</comment>
<keyword id="KW-0963">Cytoplasm</keyword>
<keyword id="KW-0275">Fatty acid biosynthesis</keyword>
<keyword id="KW-0276">Fatty acid metabolism</keyword>
<keyword id="KW-0444">Lipid biosynthesis</keyword>
<keyword id="KW-0443">Lipid metabolism</keyword>
<keyword id="KW-0460">Magnesium</keyword>
<keyword id="KW-0479">Metal-binding</keyword>
<keyword id="KW-1185">Reference proteome</keyword>
<keyword id="KW-0808">Transferase</keyword>
<protein>
    <recommendedName>
        <fullName evidence="1">Holo-[acyl-carrier-protein] synthase</fullName>
        <shortName evidence="1">Holo-ACP synthase</shortName>
        <ecNumber evidence="1">2.7.8.7</ecNumber>
    </recommendedName>
    <alternativeName>
        <fullName evidence="1">4'-phosphopantetheinyl transferase AcpS</fullName>
    </alternativeName>
</protein>
<name>ACPS_SHEDO</name>
<sequence length="126" mass="13581">MAIIGIGTDIVEIERIREQRDRLGDKLAKRVLTLDELAIYAAVNMPERYLAKRFAAKEAAAKALGTGIGRGVSFQHIHISNDDNGAPLVNFTDGAALRLAQLGGCKGHISIADEKHYAIATVILES</sequence>
<evidence type="ECO:0000255" key="1">
    <source>
        <dbReference type="HAMAP-Rule" id="MF_00101"/>
    </source>
</evidence>